<evidence type="ECO:0000255" key="1">
    <source>
        <dbReference type="HAMAP-Rule" id="MF_00248"/>
    </source>
</evidence>
<accession>Q9PHK9</accession>
<accession>Q0PAL0</accession>
<gene>
    <name evidence="1" type="primary">hslV</name>
    <name type="ordered locus">Cj0663c</name>
</gene>
<reference key="1">
    <citation type="journal article" date="2000" name="Nature">
        <title>The genome sequence of the food-borne pathogen Campylobacter jejuni reveals hypervariable sequences.</title>
        <authorList>
            <person name="Parkhill J."/>
            <person name="Wren B.W."/>
            <person name="Mungall K.L."/>
            <person name="Ketley J.M."/>
            <person name="Churcher C.M."/>
            <person name="Basham D."/>
            <person name="Chillingworth T."/>
            <person name="Davies R.M."/>
            <person name="Feltwell T."/>
            <person name="Holroyd S."/>
            <person name="Jagels K."/>
            <person name="Karlyshev A.V."/>
            <person name="Moule S."/>
            <person name="Pallen M.J."/>
            <person name="Penn C.W."/>
            <person name="Quail M.A."/>
            <person name="Rajandream M.A."/>
            <person name="Rutherford K.M."/>
            <person name="van Vliet A.H.M."/>
            <person name="Whitehead S."/>
            <person name="Barrell B.G."/>
        </authorList>
    </citation>
    <scope>NUCLEOTIDE SEQUENCE [LARGE SCALE GENOMIC DNA]</scope>
    <source>
        <strain>ATCC 700819 / NCTC 11168</strain>
    </source>
</reference>
<organism>
    <name type="scientific">Campylobacter jejuni subsp. jejuni serotype O:2 (strain ATCC 700819 / NCTC 11168)</name>
    <dbReference type="NCBI Taxonomy" id="192222"/>
    <lineage>
        <taxon>Bacteria</taxon>
        <taxon>Pseudomonadati</taxon>
        <taxon>Campylobacterota</taxon>
        <taxon>Epsilonproteobacteria</taxon>
        <taxon>Campylobacterales</taxon>
        <taxon>Campylobacteraceae</taxon>
        <taxon>Campylobacter</taxon>
    </lineage>
</organism>
<comment type="function">
    <text evidence="1">Protease subunit of a proteasome-like degradation complex believed to be a general protein degrading machinery.</text>
</comment>
<comment type="catalytic activity">
    <reaction evidence="1">
        <text>ATP-dependent cleavage of peptide bonds with broad specificity.</text>
        <dbReference type="EC" id="3.4.25.2"/>
    </reaction>
</comment>
<comment type="activity regulation">
    <text evidence="1">Allosterically activated by HslU binding.</text>
</comment>
<comment type="subunit">
    <text evidence="1">A double ring-shaped homohexamer of HslV is capped on each side by a ring-shaped HslU homohexamer. The assembly of the HslU/HslV complex is dependent on binding of ATP.</text>
</comment>
<comment type="subcellular location">
    <subcellularLocation>
        <location evidence="1">Cytoplasm</location>
    </subcellularLocation>
</comment>
<comment type="similarity">
    <text evidence="1">Belongs to the peptidase T1B family. HslV subfamily.</text>
</comment>
<sequence length="180" mass="19592">MFHATTILAYKGKNKSVIGGDGQVSFGNTVLKGNAVKIRKLNNGKVLAGFAGSTADAFNLFDMFENLLQSSKGDLLKAAIDFSKEWRKDKYLRKLEAMMLVLDRNHIFLLSGTGDVVEPEDGQIAAIGSGGNYALSAARALAKHTDLDEEELVKSSLQIAGEICIYTNTNIKTYVIEDEK</sequence>
<dbReference type="EC" id="3.4.25.2" evidence="1"/>
<dbReference type="EMBL" id="AL111168">
    <property type="protein sequence ID" value="CAL34804.1"/>
    <property type="molecule type" value="Genomic_DNA"/>
</dbReference>
<dbReference type="PIR" id="A81415">
    <property type="entry name" value="A81415"/>
</dbReference>
<dbReference type="RefSeq" id="WP_002781630.1">
    <property type="nucleotide sequence ID" value="NZ_SZUC01000002.1"/>
</dbReference>
<dbReference type="RefSeq" id="YP_002344087.1">
    <property type="nucleotide sequence ID" value="NC_002163.1"/>
</dbReference>
<dbReference type="SMR" id="Q9PHK9"/>
<dbReference type="IntAct" id="Q9PHK9">
    <property type="interactions" value="88"/>
</dbReference>
<dbReference type="STRING" id="192222.Cj0663c"/>
<dbReference type="PaxDb" id="192222-Cj0663c"/>
<dbReference type="EnsemblBacteria" id="CAL34804">
    <property type="protein sequence ID" value="CAL34804"/>
    <property type="gene ID" value="Cj0663c"/>
</dbReference>
<dbReference type="GeneID" id="904986"/>
<dbReference type="KEGG" id="cje:Cj0663c"/>
<dbReference type="PATRIC" id="fig|192222.6.peg.655"/>
<dbReference type="eggNOG" id="COG5405">
    <property type="taxonomic scope" value="Bacteria"/>
</dbReference>
<dbReference type="HOGENOM" id="CLU_093872_1_1_7"/>
<dbReference type="OrthoDB" id="9804884at2"/>
<dbReference type="Proteomes" id="UP000000799">
    <property type="component" value="Chromosome"/>
</dbReference>
<dbReference type="GO" id="GO:0009376">
    <property type="term" value="C:HslUV protease complex"/>
    <property type="evidence" value="ECO:0007669"/>
    <property type="project" value="UniProtKB-UniRule"/>
</dbReference>
<dbReference type="GO" id="GO:0005839">
    <property type="term" value="C:proteasome core complex"/>
    <property type="evidence" value="ECO:0007669"/>
    <property type="project" value="InterPro"/>
</dbReference>
<dbReference type="GO" id="GO:0046872">
    <property type="term" value="F:metal ion binding"/>
    <property type="evidence" value="ECO:0007669"/>
    <property type="project" value="UniProtKB-KW"/>
</dbReference>
<dbReference type="GO" id="GO:0004298">
    <property type="term" value="F:threonine-type endopeptidase activity"/>
    <property type="evidence" value="ECO:0007669"/>
    <property type="project" value="UniProtKB-KW"/>
</dbReference>
<dbReference type="GO" id="GO:0051603">
    <property type="term" value="P:proteolysis involved in protein catabolic process"/>
    <property type="evidence" value="ECO:0007669"/>
    <property type="project" value="InterPro"/>
</dbReference>
<dbReference type="CDD" id="cd01913">
    <property type="entry name" value="protease_HslV"/>
    <property type="match status" value="1"/>
</dbReference>
<dbReference type="Gene3D" id="3.60.20.10">
    <property type="entry name" value="Glutamine Phosphoribosylpyrophosphate, subunit 1, domain 1"/>
    <property type="match status" value="1"/>
</dbReference>
<dbReference type="HAMAP" id="MF_00248">
    <property type="entry name" value="HslV"/>
    <property type="match status" value="1"/>
</dbReference>
<dbReference type="InterPro" id="IPR022281">
    <property type="entry name" value="ATP-dep_Prtase_HsIV_su"/>
</dbReference>
<dbReference type="InterPro" id="IPR029055">
    <property type="entry name" value="Ntn_hydrolases_N"/>
</dbReference>
<dbReference type="InterPro" id="IPR001353">
    <property type="entry name" value="Proteasome_sua/b"/>
</dbReference>
<dbReference type="InterPro" id="IPR023333">
    <property type="entry name" value="Proteasome_suB-type"/>
</dbReference>
<dbReference type="NCBIfam" id="TIGR03692">
    <property type="entry name" value="ATP_dep_HslV"/>
    <property type="match status" value="1"/>
</dbReference>
<dbReference type="NCBIfam" id="NF003964">
    <property type="entry name" value="PRK05456.1"/>
    <property type="match status" value="1"/>
</dbReference>
<dbReference type="PANTHER" id="PTHR32194:SF0">
    <property type="entry name" value="ATP-DEPENDENT PROTEASE SUBUNIT HSLV"/>
    <property type="match status" value="1"/>
</dbReference>
<dbReference type="PANTHER" id="PTHR32194">
    <property type="entry name" value="METALLOPROTEASE TLDD"/>
    <property type="match status" value="1"/>
</dbReference>
<dbReference type="Pfam" id="PF00227">
    <property type="entry name" value="Proteasome"/>
    <property type="match status" value="1"/>
</dbReference>
<dbReference type="PIRSF" id="PIRSF039093">
    <property type="entry name" value="HslV"/>
    <property type="match status" value="1"/>
</dbReference>
<dbReference type="SUPFAM" id="SSF56235">
    <property type="entry name" value="N-terminal nucleophile aminohydrolases (Ntn hydrolases)"/>
    <property type="match status" value="1"/>
</dbReference>
<dbReference type="PROSITE" id="PS51476">
    <property type="entry name" value="PROTEASOME_BETA_2"/>
    <property type="match status" value="1"/>
</dbReference>
<feature type="chain" id="PRO_0000148099" description="ATP-dependent protease subunit HslV">
    <location>
        <begin position="1"/>
        <end position="180"/>
    </location>
</feature>
<feature type="active site" evidence="1">
    <location>
        <position position="5"/>
    </location>
</feature>
<feature type="binding site" evidence="1">
    <location>
        <position position="161"/>
    </location>
    <ligand>
        <name>Na(+)</name>
        <dbReference type="ChEBI" id="CHEBI:29101"/>
    </ligand>
</feature>
<feature type="binding site" evidence="1">
    <location>
        <position position="164"/>
    </location>
    <ligand>
        <name>Na(+)</name>
        <dbReference type="ChEBI" id="CHEBI:29101"/>
    </ligand>
</feature>
<feature type="binding site" evidence="1">
    <location>
        <position position="167"/>
    </location>
    <ligand>
        <name>Na(+)</name>
        <dbReference type="ChEBI" id="CHEBI:29101"/>
    </ligand>
</feature>
<name>HSLV_CAMJE</name>
<proteinExistence type="inferred from homology"/>
<keyword id="KW-0021">Allosteric enzyme</keyword>
<keyword id="KW-0963">Cytoplasm</keyword>
<keyword id="KW-0378">Hydrolase</keyword>
<keyword id="KW-0479">Metal-binding</keyword>
<keyword id="KW-0645">Protease</keyword>
<keyword id="KW-1185">Reference proteome</keyword>
<keyword id="KW-0915">Sodium</keyword>
<keyword id="KW-0888">Threonine protease</keyword>
<protein>
    <recommendedName>
        <fullName evidence="1">ATP-dependent protease subunit HslV</fullName>
        <ecNumber evidence="1">3.4.25.2</ecNumber>
    </recommendedName>
</protein>